<protein>
    <recommendedName>
        <fullName evidence="1">Glycerol-3-phosphate acyltransferase</fullName>
    </recommendedName>
    <alternativeName>
        <fullName evidence="1">Acyl-PO4 G3P acyltransferase</fullName>
    </alternativeName>
    <alternativeName>
        <fullName evidence="1">Acyl-phosphate--glycerol-3-phosphate acyltransferase</fullName>
    </alternativeName>
    <alternativeName>
        <fullName evidence="1">G3P acyltransferase</fullName>
        <shortName evidence="1">GPAT</shortName>
        <ecNumber evidence="1">2.3.1.275</ecNumber>
    </alternativeName>
    <alternativeName>
        <fullName evidence="1">Lysophosphatidic acid synthase</fullName>
        <shortName evidence="1">LPA synthase</shortName>
    </alternativeName>
</protein>
<proteinExistence type="inferred from homology"/>
<reference key="1">
    <citation type="submission" date="2007-11" db="EMBL/GenBank/DDBJ databases">
        <title>Genome sequencing of phylogenetically and phenotypically diverse Coxiella burnetii isolates.</title>
        <authorList>
            <person name="Seshadri R."/>
            <person name="Samuel J.E."/>
        </authorList>
    </citation>
    <scope>NUCLEOTIDE SEQUENCE [LARGE SCALE GENOMIC DNA]</scope>
    <source>
        <strain>RSA 331 / Henzerling II</strain>
    </source>
</reference>
<gene>
    <name evidence="1" type="primary">plsY</name>
    <name type="ordered locus">COXBURSA331_A1382</name>
</gene>
<name>PLSY_COXBR</name>
<accession>A9NDU9</accession>
<feature type="chain" id="PRO_1000084383" description="Glycerol-3-phosphate acyltransferase">
    <location>
        <begin position="1"/>
        <end position="193"/>
    </location>
</feature>
<feature type="transmembrane region" description="Helical" evidence="1">
    <location>
        <begin position="2"/>
        <end position="22"/>
    </location>
</feature>
<feature type="transmembrane region" description="Helical" evidence="1">
    <location>
        <begin position="51"/>
        <end position="71"/>
    </location>
</feature>
<feature type="transmembrane region" description="Helical" evidence="1">
    <location>
        <begin position="78"/>
        <end position="98"/>
    </location>
</feature>
<feature type="transmembrane region" description="Helical" evidence="1">
    <location>
        <begin position="112"/>
        <end position="132"/>
    </location>
</feature>
<feature type="transmembrane region" description="Helical" evidence="1">
    <location>
        <begin position="154"/>
        <end position="174"/>
    </location>
</feature>
<comment type="function">
    <text evidence="1">Catalyzes the transfer of an acyl group from acyl-phosphate (acyl-PO(4)) to glycerol-3-phosphate (G3P) to form lysophosphatidic acid (LPA). This enzyme utilizes acyl-phosphate as fatty acyl donor, but not acyl-CoA or acyl-ACP.</text>
</comment>
<comment type="catalytic activity">
    <reaction evidence="1">
        <text>an acyl phosphate + sn-glycerol 3-phosphate = a 1-acyl-sn-glycero-3-phosphate + phosphate</text>
        <dbReference type="Rhea" id="RHEA:34075"/>
        <dbReference type="ChEBI" id="CHEBI:43474"/>
        <dbReference type="ChEBI" id="CHEBI:57597"/>
        <dbReference type="ChEBI" id="CHEBI:57970"/>
        <dbReference type="ChEBI" id="CHEBI:59918"/>
        <dbReference type="EC" id="2.3.1.275"/>
    </reaction>
</comment>
<comment type="pathway">
    <text evidence="1">Lipid metabolism; phospholipid metabolism.</text>
</comment>
<comment type="subunit">
    <text evidence="1">Probably interacts with PlsX.</text>
</comment>
<comment type="subcellular location">
    <subcellularLocation>
        <location evidence="1">Cell inner membrane</location>
        <topology evidence="1">Multi-pass membrane protein</topology>
    </subcellularLocation>
</comment>
<comment type="similarity">
    <text evidence="1">Belongs to the PlsY family.</text>
</comment>
<sequence>MAFIISIIIAYLLGSLSFAVIVAKLMKLPDPRTTGSGNAGATNMLRVGGRQAAFYVLLGDAAKGLIAVLIARFLNVQGVSLAFVGLVAVLGHLFPVYFKFRGGKGVATMMGVLLGLSFWIGLFVIATWVIVVSIFRYSSVAALVSAVAAPIYTIIAGRTDYLFPVLIIAILIIWKHWENFQRLRKGTEDKVKL</sequence>
<evidence type="ECO:0000255" key="1">
    <source>
        <dbReference type="HAMAP-Rule" id="MF_01043"/>
    </source>
</evidence>
<organism>
    <name type="scientific">Coxiella burnetii (strain RSA 331 / Henzerling II)</name>
    <dbReference type="NCBI Taxonomy" id="360115"/>
    <lineage>
        <taxon>Bacteria</taxon>
        <taxon>Pseudomonadati</taxon>
        <taxon>Pseudomonadota</taxon>
        <taxon>Gammaproteobacteria</taxon>
        <taxon>Legionellales</taxon>
        <taxon>Coxiellaceae</taxon>
        <taxon>Coxiella</taxon>
    </lineage>
</organism>
<keyword id="KW-0997">Cell inner membrane</keyword>
<keyword id="KW-1003">Cell membrane</keyword>
<keyword id="KW-0444">Lipid biosynthesis</keyword>
<keyword id="KW-0443">Lipid metabolism</keyword>
<keyword id="KW-0472">Membrane</keyword>
<keyword id="KW-0594">Phospholipid biosynthesis</keyword>
<keyword id="KW-1208">Phospholipid metabolism</keyword>
<keyword id="KW-0808">Transferase</keyword>
<keyword id="KW-0812">Transmembrane</keyword>
<keyword id="KW-1133">Transmembrane helix</keyword>
<dbReference type="EC" id="2.3.1.275" evidence="1"/>
<dbReference type="EMBL" id="CP000890">
    <property type="protein sequence ID" value="ABX78858.1"/>
    <property type="molecule type" value="Genomic_DNA"/>
</dbReference>
<dbReference type="RefSeq" id="WP_005770791.1">
    <property type="nucleotide sequence ID" value="NC_010117.1"/>
</dbReference>
<dbReference type="SMR" id="A9NDU9"/>
<dbReference type="KEGG" id="cbs:COXBURSA331_A1382"/>
<dbReference type="HOGENOM" id="CLU_081254_0_0_6"/>
<dbReference type="UniPathway" id="UPA00085"/>
<dbReference type="GO" id="GO:0005886">
    <property type="term" value="C:plasma membrane"/>
    <property type="evidence" value="ECO:0007669"/>
    <property type="project" value="UniProtKB-SubCell"/>
</dbReference>
<dbReference type="GO" id="GO:0043772">
    <property type="term" value="F:acyl-phosphate glycerol-3-phosphate acyltransferase activity"/>
    <property type="evidence" value="ECO:0007669"/>
    <property type="project" value="UniProtKB-UniRule"/>
</dbReference>
<dbReference type="GO" id="GO:0008654">
    <property type="term" value="P:phospholipid biosynthetic process"/>
    <property type="evidence" value="ECO:0007669"/>
    <property type="project" value="UniProtKB-UniRule"/>
</dbReference>
<dbReference type="HAMAP" id="MF_01043">
    <property type="entry name" value="PlsY"/>
    <property type="match status" value="1"/>
</dbReference>
<dbReference type="InterPro" id="IPR003811">
    <property type="entry name" value="G3P_acylTferase_PlsY"/>
</dbReference>
<dbReference type="NCBIfam" id="TIGR00023">
    <property type="entry name" value="glycerol-3-phosphate 1-O-acyltransferase PlsY"/>
    <property type="match status" value="1"/>
</dbReference>
<dbReference type="PANTHER" id="PTHR30309:SF0">
    <property type="entry name" value="GLYCEROL-3-PHOSPHATE ACYLTRANSFERASE-RELATED"/>
    <property type="match status" value="1"/>
</dbReference>
<dbReference type="PANTHER" id="PTHR30309">
    <property type="entry name" value="INNER MEMBRANE PROTEIN YGIH"/>
    <property type="match status" value="1"/>
</dbReference>
<dbReference type="Pfam" id="PF02660">
    <property type="entry name" value="G3P_acyltransf"/>
    <property type="match status" value="1"/>
</dbReference>
<dbReference type="SMART" id="SM01207">
    <property type="entry name" value="G3P_acyltransf"/>
    <property type="match status" value="1"/>
</dbReference>